<evidence type="ECO:0000250" key="1"/>
<evidence type="ECO:0000250" key="2">
    <source>
        <dbReference type="UniProtKB" id="Q8BUZ1"/>
    </source>
</evidence>
<evidence type="ECO:0000250" key="3">
    <source>
        <dbReference type="UniProtKB" id="Q8K4K7"/>
    </source>
</evidence>
<evidence type="ECO:0000256" key="4">
    <source>
        <dbReference type="SAM" id="MobiDB-lite"/>
    </source>
</evidence>
<evidence type="ECO:0000312" key="5">
    <source>
        <dbReference type="EMBL" id="AAI05104.1"/>
    </source>
</evidence>
<evidence type="ECO:0000312" key="6">
    <source>
        <dbReference type="EMBL" id="AAI05106.1"/>
    </source>
</evidence>
<evidence type="ECO:0000312" key="7">
    <source>
        <dbReference type="EMBL" id="AAM27268.1"/>
    </source>
</evidence>
<evidence type="ECO:0000312" key="8">
    <source>
        <dbReference type="EMBL" id="BAC03948.1"/>
    </source>
</evidence>
<reference evidence="7" key="1">
    <citation type="journal article" date="2002" name="J. Biol. Chem.">
        <title>STARS, a striated muscle activator of Rho signaling and serum response factor-dependent transcription.</title>
        <authorList>
            <person name="Arai A."/>
            <person name="Spencer J.A."/>
            <person name="Olson E.N."/>
        </authorList>
    </citation>
    <scope>NUCLEOTIDE SEQUENCE [MRNA]</scope>
</reference>
<reference evidence="8" key="2">
    <citation type="journal article" date="2004" name="Nat. Genet.">
        <title>Complete sequencing and characterization of 21,243 full-length human cDNAs.</title>
        <authorList>
            <person name="Ota T."/>
            <person name="Suzuki Y."/>
            <person name="Nishikawa T."/>
            <person name="Otsuki T."/>
            <person name="Sugiyama T."/>
            <person name="Irie R."/>
            <person name="Wakamatsu A."/>
            <person name="Hayashi K."/>
            <person name="Sato H."/>
            <person name="Nagai K."/>
            <person name="Kimura K."/>
            <person name="Makita H."/>
            <person name="Sekine M."/>
            <person name="Obayashi M."/>
            <person name="Nishi T."/>
            <person name="Shibahara T."/>
            <person name="Tanaka T."/>
            <person name="Ishii S."/>
            <person name="Yamamoto J."/>
            <person name="Saito K."/>
            <person name="Kawai Y."/>
            <person name="Isono Y."/>
            <person name="Nakamura Y."/>
            <person name="Nagahari K."/>
            <person name="Murakami K."/>
            <person name="Yasuda T."/>
            <person name="Iwayanagi T."/>
            <person name="Wagatsuma M."/>
            <person name="Shiratori A."/>
            <person name="Sudo H."/>
            <person name="Hosoiri T."/>
            <person name="Kaku Y."/>
            <person name="Kodaira H."/>
            <person name="Kondo H."/>
            <person name="Sugawara M."/>
            <person name="Takahashi M."/>
            <person name="Kanda K."/>
            <person name="Yokoi T."/>
            <person name="Furuya T."/>
            <person name="Kikkawa E."/>
            <person name="Omura Y."/>
            <person name="Abe K."/>
            <person name="Kamihara K."/>
            <person name="Katsuta N."/>
            <person name="Sato K."/>
            <person name="Tanikawa M."/>
            <person name="Yamazaki M."/>
            <person name="Ninomiya K."/>
            <person name="Ishibashi T."/>
            <person name="Yamashita H."/>
            <person name="Murakawa K."/>
            <person name="Fujimori K."/>
            <person name="Tanai H."/>
            <person name="Kimata M."/>
            <person name="Watanabe M."/>
            <person name="Hiraoka S."/>
            <person name="Chiba Y."/>
            <person name="Ishida S."/>
            <person name="Ono Y."/>
            <person name="Takiguchi S."/>
            <person name="Watanabe S."/>
            <person name="Yosida M."/>
            <person name="Hotuta T."/>
            <person name="Kusano J."/>
            <person name="Kanehori K."/>
            <person name="Takahashi-Fujii A."/>
            <person name="Hara H."/>
            <person name="Tanase T.-O."/>
            <person name="Nomura Y."/>
            <person name="Togiya S."/>
            <person name="Komai F."/>
            <person name="Hara R."/>
            <person name="Takeuchi K."/>
            <person name="Arita M."/>
            <person name="Imose N."/>
            <person name="Musashino K."/>
            <person name="Yuuki H."/>
            <person name="Oshima A."/>
            <person name="Sasaki N."/>
            <person name="Aotsuka S."/>
            <person name="Yoshikawa Y."/>
            <person name="Matsunawa H."/>
            <person name="Ichihara T."/>
            <person name="Shiohata N."/>
            <person name="Sano S."/>
            <person name="Moriya S."/>
            <person name="Momiyama H."/>
            <person name="Satoh N."/>
            <person name="Takami S."/>
            <person name="Terashima Y."/>
            <person name="Suzuki O."/>
            <person name="Nakagawa S."/>
            <person name="Senoh A."/>
            <person name="Mizoguchi H."/>
            <person name="Goto Y."/>
            <person name="Shimizu F."/>
            <person name="Wakebe H."/>
            <person name="Hishigaki H."/>
            <person name="Watanabe T."/>
            <person name="Sugiyama A."/>
            <person name="Takemoto M."/>
            <person name="Kawakami B."/>
            <person name="Yamazaki M."/>
            <person name="Watanabe K."/>
            <person name="Kumagai A."/>
            <person name="Itakura S."/>
            <person name="Fukuzumi Y."/>
            <person name="Fujimori Y."/>
            <person name="Komiyama M."/>
            <person name="Tashiro H."/>
            <person name="Tanigami A."/>
            <person name="Fujiwara T."/>
            <person name="Ono T."/>
            <person name="Yamada K."/>
            <person name="Fujii Y."/>
            <person name="Ozaki K."/>
            <person name="Hirao M."/>
            <person name="Ohmori Y."/>
            <person name="Kawabata A."/>
            <person name="Hikiji T."/>
            <person name="Kobatake N."/>
            <person name="Inagaki H."/>
            <person name="Ikema Y."/>
            <person name="Okamoto S."/>
            <person name="Okitani R."/>
            <person name="Kawakami T."/>
            <person name="Noguchi S."/>
            <person name="Itoh T."/>
            <person name="Shigeta K."/>
            <person name="Senba T."/>
            <person name="Matsumura K."/>
            <person name="Nakajima Y."/>
            <person name="Mizuno T."/>
            <person name="Morinaga M."/>
            <person name="Sasaki M."/>
            <person name="Togashi T."/>
            <person name="Oyama M."/>
            <person name="Hata H."/>
            <person name="Watanabe M."/>
            <person name="Komatsu T."/>
            <person name="Mizushima-Sugano J."/>
            <person name="Satoh T."/>
            <person name="Shirai Y."/>
            <person name="Takahashi Y."/>
            <person name="Nakagawa K."/>
            <person name="Okumura K."/>
            <person name="Nagase T."/>
            <person name="Nomura N."/>
            <person name="Kikuchi H."/>
            <person name="Masuho Y."/>
            <person name="Yamashita R."/>
            <person name="Nakai K."/>
            <person name="Yada T."/>
            <person name="Nakamura Y."/>
            <person name="Ohara O."/>
            <person name="Isogai T."/>
            <person name="Sugano S."/>
        </authorList>
    </citation>
    <scope>NUCLEOTIDE SEQUENCE [LARGE SCALE MRNA]</scope>
    <source>
        <tissue evidence="8">Skeletal muscle</tissue>
    </source>
</reference>
<reference key="3">
    <citation type="journal article" date="2007" name="BMC Genomics">
        <title>The full-ORF clone resource of the German cDNA consortium.</title>
        <authorList>
            <person name="Bechtel S."/>
            <person name="Rosenfelder H."/>
            <person name="Duda A."/>
            <person name="Schmidt C.P."/>
            <person name="Ernst U."/>
            <person name="Wellenreuther R."/>
            <person name="Mehrle A."/>
            <person name="Schuster C."/>
            <person name="Bahr A."/>
            <person name="Bloecker H."/>
            <person name="Heubner D."/>
            <person name="Hoerlein A."/>
            <person name="Michel G."/>
            <person name="Wedler H."/>
            <person name="Koehrer K."/>
            <person name="Ottenwaelder B."/>
            <person name="Poustka A."/>
            <person name="Wiemann S."/>
            <person name="Schupp I."/>
        </authorList>
    </citation>
    <scope>NUCLEOTIDE SEQUENCE [LARGE SCALE MRNA]</scope>
    <source>
        <tissue>Heart</tissue>
    </source>
</reference>
<reference evidence="5" key="4">
    <citation type="journal article" date="2004" name="Genome Res.">
        <title>The status, quality, and expansion of the NIH full-length cDNA project: the Mammalian Gene Collection (MGC).</title>
        <authorList>
            <consortium name="The MGC Project Team"/>
        </authorList>
    </citation>
    <scope>NUCLEOTIDE SEQUENCE [LARGE SCALE MRNA]</scope>
</reference>
<organism>
    <name type="scientific">Homo sapiens</name>
    <name type="common">Human</name>
    <dbReference type="NCBI Taxonomy" id="9606"/>
    <lineage>
        <taxon>Eukaryota</taxon>
        <taxon>Metazoa</taxon>
        <taxon>Chordata</taxon>
        <taxon>Craniata</taxon>
        <taxon>Vertebrata</taxon>
        <taxon>Euteleostomi</taxon>
        <taxon>Mammalia</taxon>
        <taxon>Eutheria</taxon>
        <taxon>Euarchontoglires</taxon>
        <taxon>Primates</taxon>
        <taxon>Haplorrhini</taxon>
        <taxon>Catarrhini</taxon>
        <taxon>Hominidae</taxon>
        <taxon>Homo</taxon>
    </lineage>
</organism>
<comment type="function">
    <text evidence="2">Acts as an activator of serum response factor (SRF)-dependent transcription possibly by inducing nuclear translocation of MKL1 or MKL2 and through a mechanism requiring Rho-actin signaling.</text>
</comment>
<comment type="subunit">
    <text evidence="1">Binds F-actin and ABLIM1, ABLIM2 and ABLIM3. Interaction with ABLIM2 and ABLIM3 enhances activity (By similarity).</text>
</comment>
<comment type="interaction">
    <interactant intactId="EBI-3893380">
        <id>Q8N0Z2</id>
    </interactant>
    <interactant intactId="EBI-2557469">
        <id>Q6NYC8</id>
        <label>PPP1R18</label>
    </interactant>
    <organismsDiffer>false</organismsDiffer>
    <experiments>3</experiments>
</comment>
<comment type="subcellular location">
    <subcellularLocation>
        <location evidence="1">Cytoplasm</location>
        <location evidence="1">Myofibril</location>
        <location evidence="1">Sarcomere</location>
    </subcellularLocation>
    <subcellularLocation>
        <location evidence="1">Cytoplasm</location>
        <location evidence="1">Cytoskeleton</location>
    </subcellularLocation>
    <text evidence="1">Localized to the I-band of the sarcomere and to a lesser extent to the sarcomeric structure between Z-lines.</text>
</comment>
<comment type="domain">
    <text evidence="1">The actin-binding domain 1 (ABD1) is intrinsically disordered, and binds to F-actin with higher affinity than ABD2.</text>
</comment>
<feature type="chain" id="PRO_0000247739" description="Actin-binding Rho-activating protein">
    <location>
        <begin position="1"/>
        <end position="381"/>
    </location>
</feature>
<feature type="region of interest" description="Disordered" evidence="4">
    <location>
        <begin position="39"/>
        <end position="156"/>
    </location>
</feature>
<feature type="region of interest" description="Disordered" evidence="4">
    <location>
        <begin position="179"/>
        <end position="207"/>
    </location>
</feature>
<feature type="region of interest" description="Actin-binding 1" evidence="1">
    <location>
        <begin position="199"/>
        <end position="299"/>
    </location>
</feature>
<feature type="region of interest" description="Interaction with actin" evidence="2">
    <location>
        <begin position="240"/>
        <end position="285"/>
    </location>
</feature>
<feature type="region of interest" description="Actin-binding 2" evidence="1">
    <location>
        <begin position="300"/>
        <end position="381"/>
    </location>
</feature>
<feature type="region of interest" description="Interaction with actin" evidence="2">
    <location>
        <begin position="352"/>
        <end position="381"/>
    </location>
</feature>
<feature type="compositionally biased region" description="Polar residues" evidence="4">
    <location>
        <begin position="69"/>
        <end position="79"/>
    </location>
</feature>
<feature type="compositionally biased region" description="Basic and acidic residues" evidence="4">
    <location>
        <begin position="97"/>
        <end position="110"/>
    </location>
</feature>
<feature type="compositionally biased region" description="Basic and acidic residues" evidence="4">
    <location>
        <begin position="179"/>
        <end position="188"/>
    </location>
</feature>
<feature type="modified residue" description="Phosphoserine" evidence="3">
    <location>
        <position position="156"/>
    </location>
</feature>
<feature type="modified residue" description="Phosphoserine" evidence="3">
    <location>
        <position position="188"/>
    </location>
</feature>
<sequence>MAPGEKESGEGPAKSALRKIRTATLVISLARGWQQWANENSIRQAQEPTGWLPGGTQDSPQAPKPITPPTSHQKAQSAPKSPPRLPEGHGDGQSSEKAPEVSHIKKKEVSKTVVSKTYERGGDVSHLSHRYERDAGVLEPGQPENDIDRILHSHGSPTRRRKCANLVSELTKGWRVMEQEEPTWRSDSVDTEDSGYGGEAEERPEQDGVQVAVVRIKRPLPSQVNRFTEKLNCKAQQKYSPVGNLKGRWQQWADEHIQSQKLNPFSEEFDYELAMSTRLHKGDEGYGRPKEGTKTAERAKRAEEHIYREMMDMCFIICTMARHRRDGKIQVTFGDLFDRYVRISDKVVGILMRARKHGLVDFEGEMLWQGRDDHVVITLLK</sequence>
<gene>
    <name evidence="6" type="primary">ABRA</name>
</gene>
<accession>Q8N0Z2</accession>
<protein>
    <recommendedName>
        <fullName>Actin-binding Rho-activating protein</fullName>
    </recommendedName>
    <alternativeName>
        <fullName>Striated muscle activator of Rho-dependent signaling</fullName>
        <shortName>STARS</shortName>
    </alternativeName>
</protein>
<name>ABRA_HUMAN</name>
<dbReference type="EMBL" id="AF503617">
    <property type="protein sequence ID" value="AAM27268.1"/>
    <property type="molecule type" value="mRNA"/>
</dbReference>
<dbReference type="EMBL" id="AK092694">
    <property type="protein sequence ID" value="BAC03948.1"/>
    <property type="molecule type" value="mRNA"/>
</dbReference>
<dbReference type="EMBL" id="AL833422">
    <property type="status" value="NOT_ANNOTATED_CDS"/>
    <property type="molecule type" value="mRNA"/>
</dbReference>
<dbReference type="EMBL" id="BC105103">
    <property type="protein sequence ID" value="AAI05104.1"/>
    <property type="molecule type" value="mRNA"/>
</dbReference>
<dbReference type="EMBL" id="BC105105">
    <property type="protein sequence ID" value="AAI05106.1"/>
    <property type="molecule type" value="mRNA"/>
</dbReference>
<dbReference type="CCDS" id="CCDS6305.1"/>
<dbReference type="RefSeq" id="NP_631905.1">
    <property type="nucleotide sequence ID" value="NM_139166.5"/>
</dbReference>
<dbReference type="RefSeq" id="XP_054215727.1">
    <property type="nucleotide sequence ID" value="XM_054359752.1"/>
</dbReference>
<dbReference type="SMR" id="Q8N0Z2"/>
<dbReference type="BioGRID" id="126483">
    <property type="interactions" value="36"/>
</dbReference>
<dbReference type="FunCoup" id="Q8N0Z2">
    <property type="interactions" value="64"/>
</dbReference>
<dbReference type="IntAct" id="Q8N0Z2">
    <property type="interactions" value="32"/>
</dbReference>
<dbReference type="STRING" id="9606.ENSP00000311436"/>
<dbReference type="GlyGen" id="Q8N0Z2">
    <property type="glycosylation" value="1 site"/>
</dbReference>
<dbReference type="iPTMnet" id="Q8N0Z2"/>
<dbReference type="PhosphoSitePlus" id="Q8N0Z2"/>
<dbReference type="BioMuta" id="ABRA"/>
<dbReference type="DMDM" id="74728477"/>
<dbReference type="MassIVE" id="Q8N0Z2"/>
<dbReference type="PaxDb" id="9606-ENSP00000311436"/>
<dbReference type="PeptideAtlas" id="Q8N0Z2"/>
<dbReference type="ProteomicsDB" id="71491"/>
<dbReference type="Antibodypedia" id="2925">
    <property type="antibodies" value="97 antibodies from 20 providers"/>
</dbReference>
<dbReference type="DNASU" id="137735"/>
<dbReference type="Ensembl" id="ENST00000311955.4">
    <property type="protein sequence ID" value="ENSP00000311436.3"/>
    <property type="gene ID" value="ENSG00000174429.4"/>
</dbReference>
<dbReference type="GeneID" id="137735"/>
<dbReference type="KEGG" id="hsa:137735"/>
<dbReference type="MANE-Select" id="ENST00000311955.4">
    <property type="protein sequence ID" value="ENSP00000311436.3"/>
    <property type="RefSeq nucleotide sequence ID" value="NM_139166.5"/>
    <property type="RefSeq protein sequence ID" value="NP_631905.1"/>
</dbReference>
<dbReference type="UCSC" id="uc003ymm.5">
    <property type="organism name" value="human"/>
</dbReference>
<dbReference type="AGR" id="HGNC:30655"/>
<dbReference type="CTD" id="137735"/>
<dbReference type="DisGeNET" id="137735"/>
<dbReference type="GeneCards" id="ABRA"/>
<dbReference type="HGNC" id="HGNC:30655">
    <property type="gene designation" value="ABRA"/>
</dbReference>
<dbReference type="HPA" id="ENSG00000174429">
    <property type="expression patterns" value="Tissue enhanced (heart muscle, skeletal muscle, tongue)"/>
</dbReference>
<dbReference type="MIM" id="609747">
    <property type="type" value="gene"/>
</dbReference>
<dbReference type="neXtProt" id="NX_Q8N0Z2"/>
<dbReference type="OpenTargets" id="ENSG00000174429"/>
<dbReference type="PharmGKB" id="PA143485290"/>
<dbReference type="VEuPathDB" id="HostDB:ENSG00000174429"/>
<dbReference type="eggNOG" id="KOG3376">
    <property type="taxonomic scope" value="Eukaryota"/>
</dbReference>
<dbReference type="GeneTree" id="ENSGT00390000015984"/>
<dbReference type="HOGENOM" id="CLU_062244_0_0_1"/>
<dbReference type="InParanoid" id="Q8N0Z2"/>
<dbReference type="OMA" id="DEPKWRS"/>
<dbReference type="OrthoDB" id="9871914at2759"/>
<dbReference type="PAN-GO" id="Q8N0Z2">
    <property type="GO annotations" value="4 GO annotations based on evolutionary models"/>
</dbReference>
<dbReference type="PhylomeDB" id="Q8N0Z2"/>
<dbReference type="TreeFam" id="TF328879"/>
<dbReference type="PathwayCommons" id="Q8N0Z2"/>
<dbReference type="SignaLink" id="Q8N0Z2"/>
<dbReference type="BioGRID-ORCS" id="137735">
    <property type="hits" value="12 hits in 1146 CRISPR screens"/>
</dbReference>
<dbReference type="GeneWiki" id="ABRA_(gene)"/>
<dbReference type="GenomeRNAi" id="137735"/>
<dbReference type="Pharos" id="Q8N0Z2">
    <property type="development level" value="Tbio"/>
</dbReference>
<dbReference type="PRO" id="PR:Q8N0Z2"/>
<dbReference type="Proteomes" id="UP000005640">
    <property type="component" value="Chromosome 8"/>
</dbReference>
<dbReference type="RNAct" id="Q8N0Z2">
    <property type="molecule type" value="protein"/>
</dbReference>
<dbReference type="Bgee" id="ENSG00000174429">
    <property type="expression patterns" value="Expressed in skeletal muscle tissue of rectus abdominis and 106 other cell types or tissues"/>
</dbReference>
<dbReference type="GO" id="GO:0015629">
    <property type="term" value="C:actin cytoskeleton"/>
    <property type="evidence" value="ECO:0000250"/>
    <property type="project" value="HGNC-UCL"/>
</dbReference>
<dbReference type="GO" id="GO:0005886">
    <property type="term" value="C:plasma membrane"/>
    <property type="evidence" value="ECO:0000314"/>
    <property type="project" value="LIFEdb"/>
</dbReference>
<dbReference type="GO" id="GO:0030017">
    <property type="term" value="C:sarcomere"/>
    <property type="evidence" value="ECO:0000250"/>
    <property type="project" value="HGNC-UCL"/>
</dbReference>
<dbReference type="GO" id="GO:0003779">
    <property type="term" value="F:actin binding"/>
    <property type="evidence" value="ECO:0000250"/>
    <property type="project" value="HGNC-UCL"/>
</dbReference>
<dbReference type="GO" id="GO:0030036">
    <property type="term" value="P:actin cytoskeleton organization"/>
    <property type="evidence" value="ECO:0000250"/>
    <property type="project" value="HGNC-UCL"/>
</dbReference>
<dbReference type="GO" id="GO:0035025">
    <property type="term" value="P:positive regulation of Rho protein signal transduction"/>
    <property type="evidence" value="ECO:0000250"/>
    <property type="project" value="HGNC-UCL"/>
</dbReference>
<dbReference type="GO" id="GO:0045944">
    <property type="term" value="P:positive regulation of transcription by RNA polymerase II"/>
    <property type="evidence" value="ECO:0000318"/>
    <property type="project" value="GO_Central"/>
</dbReference>
<dbReference type="GO" id="GO:0006606">
    <property type="term" value="P:protein import into nucleus"/>
    <property type="evidence" value="ECO:0007669"/>
    <property type="project" value="Ensembl"/>
</dbReference>
<dbReference type="GO" id="GO:0006366">
    <property type="term" value="P:transcription by RNA polymerase II"/>
    <property type="evidence" value="ECO:0007669"/>
    <property type="project" value="Ensembl"/>
</dbReference>
<dbReference type="FunFam" id="1.10.10.1540:FF:000001">
    <property type="entry name" value="Actin-binding Rho-activating protein a"/>
    <property type="match status" value="1"/>
</dbReference>
<dbReference type="Gene3D" id="1.10.10.1540">
    <property type="entry name" value="Costar domain"/>
    <property type="match status" value="1"/>
</dbReference>
<dbReference type="InterPro" id="IPR026111">
    <property type="entry name" value="Abra"/>
</dbReference>
<dbReference type="InterPro" id="IPR027817">
    <property type="entry name" value="Costars_dom"/>
</dbReference>
<dbReference type="InterPro" id="IPR038095">
    <property type="entry name" value="Costars_sf"/>
</dbReference>
<dbReference type="PANTHER" id="PTHR22739:SF20">
    <property type="entry name" value="ACTIN-BINDING RHO-ACTIVATING PROTEIN"/>
    <property type="match status" value="1"/>
</dbReference>
<dbReference type="PANTHER" id="PTHR22739">
    <property type="entry name" value="STRIATED MUSCLE ACTIVATOR OF RHO-DEPENDENT SIGNALING-RELATED"/>
    <property type="match status" value="1"/>
</dbReference>
<dbReference type="Pfam" id="PF14705">
    <property type="entry name" value="Costars"/>
    <property type="match status" value="1"/>
</dbReference>
<dbReference type="SMART" id="SM01283">
    <property type="entry name" value="Costars"/>
    <property type="match status" value="1"/>
</dbReference>
<proteinExistence type="evidence at protein level"/>
<keyword id="KW-0009">Actin-binding</keyword>
<keyword id="KW-0010">Activator</keyword>
<keyword id="KW-0963">Cytoplasm</keyword>
<keyword id="KW-0206">Cytoskeleton</keyword>
<keyword id="KW-0597">Phosphoprotein</keyword>
<keyword id="KW-0653">Protein transport</keyword>
<keyword id="KW-1267">Proteomics identification</keyword>
<keyword id="KW-1185">Reference proteome</keyword>
<keyword id="KW-0804">Transcription</keyword>
<keyword id="KW-0805">Transcription regulation</keyword>
<keyword id="KW-0811">Translocation</keyword>
<keyword id="KW-0813">Transport</keyword>